<reference key="1">
    <citation type="journal article" date="2002" name="Nucleic Acids Res.">
        <title>The complete genomic sequence of Mycoplasma penetrans, an intracellular bacterial pathogen in humans.</title>
        <authorList>
            <person name="Sasaki Y."/>
            <person name="Ishikawa J."/>
            <person name="Yamashita A."/>
            <person name="Oshima K."/>
            <person name="Kenri T."/>
            <person name="Furuya K."/>
            <person name="Yoshino C."/>
            <person name="Horino A."/>
            <person name="Shiba T."/>
            <person name="Sasaki T."/>
            <person name="Hattori M."/>
        </authorList>
    </citation>
    <scope>NUCLEOTIDE SEQUENCE [LARGE SCALE GENOMIC DNA]</scope>
    <source>
        <strain>HF-2</strain>
    </source>
</reference>
<evidence type="ECO:0000255" key="1">
    <source>
        <dbReference type="HAMAP-Rule" id="MF_01588"/>
    </source>
</evidence>
<comment type="function">
    <text evidence="1">DNA ligase that catalyzes the formation of phosphodiester linkages between 5'-phosphoryl and 3'-hydroxyl groups in double-stranded DNA using NAD as a coenzyme and as the energy source for the reaction. It is essential for DNA replication and repair of damaged DNA.</text>
</comment>
<comment type="catalytic activity">
    <reaction evidence="1">
        <text>NAD(+) + (deoxyribonucleotide)n-3'-hydroxyl + 5'-phospho-(deoxyribonucleotide)m = (deoxyribonucleotide)n+m + AMP + beta-nicotinamide D-nucleotide.</text>
        <dbReference type="EC" id="6.5.1.2"/>
    </reaction>
</comment>
<comment type="cofactor">
    <cofactor evidence="1">
        <name>Mg(2+)</name>
        <dbReference type="ChEBI" id="CHEBI:18420"/>
    </cofactor>
    <cofactor evidence="1">
        <name>Mn(2+)</name>
        <dbReference type="ChEBI" id="CHEBI:29035"/>
    </cofactor>
</comment>
<comment type="similarity">
    <text evidence="1">Belongs to the NAD-dependent DNA ligase family. LigA subfamily.</text>
</comment>
<dbReference type="EC" id="6.5.1.2" evidence="1"/>
<dbReference type="EMBL" id="BA000026">
    <property type="protein sequence ID" value="BAC43975.1"/>
    <property type="molecule type" value="Genomic_DNA"/>
</dbReference>
<dbReference type="SMR" id="Q8EWL9"/>
<dbReference type="FunCoup" id="Q8EWL9">
    <property type="interactions" value="152"/>
</dbReference>
<dbReference type="STRING" id="272633.gene:10731283"/>
<dbReference type="KEGG" id="mpe:MYPE1840"/>
<dbReference type="eggNOG" id="COG0272">
    <property type="taxonomic scope" value="Bacteria"/>
</dbReference>
<dbReference type="HOGENOM" id="CLU_007764_2_1_14"/>
<dbReference type="InParanoid" id="Q8EWL9"/>
<dbReference type="Proteomes" id="UP000002522">
    <property type="component" value="Chromosome"/>
</dbReference>
<dbReference type="GO" id="GO:0005829">
    <property type="term" value="C:cytosol"/>
    <property type="evidence" value="ECO:0007669"/>
    <property type="project" value="TreeGrafter"/>
</dbReference>
<dbReference type="GO" id="GO:0003911">
    <property type="term" value="F:DNA ligase (NAD+) activity"/>
    <property type="evidence" value="ECO:0007669"/>
    <property type="project" value="UniProtKB-UniRule"/>
</dbReference>
<dbReference type="GO" id="GO:0046872">
    <property type="term" value="F:metal ion binding"/>
    <property type="evidence" value="ECO:0007669"/>
    <property type="project" value="UniProtKB-KW"/>
</dbReference>
<dbReference type="GO" id="GO:0006281">
    <property type="term" value="P:DNA repair"/>
    <property type="evidence" value="ECO:0007669"/>
    <property type="project" value="UniProtKB-KW"/>
</dbReference>
<dbReference type="GO" id="GO:0006260">
    <property type="term" value="P:DNA replication"/>
    <property type="evidence" value="ECO:0007669"/>
    <property type="project" value="UniProtKB-KW"/>
</dbReference>
<dbReference type="CDD" id="cd17748">
    <property type="entry name" value="BRCT_DNA_ligase_like"/>
    <property type="match status" value="1"/>
</dbReference>
<dbReference type="CDD" id="cd00114">
    <property type="entry name" value="LIGANc"/>
    <property type="match status" value="1"/>
</dbReference>
<dbReference type="FunFam" id="3.30.470.30:FF:000001">
    <property type="entry name" value="DNA ligase"/>
    <property type="match status" value="1"/>
</dbReference>
<dbReference type="Gene3D" id="6.20.10.30">
    <property type="match status" value="1"/>
</dbReference>
<dbReference type="Gene3D" id="1.10.150.20">
    <property type="entry name" value="5' to 3' exonuclease, C-terminal subdomain"/>
    <property type="match status" value="2"/>
</dbReference>
<dbReference type="Gene3D" id="3.40.50.10190">
    <property type="entry name" value="BRCT domain"/>
    <property type="match status" value="1"/>
</dbReference>
<dbReference type="Gene3D" id="3.30.470.30">
    <property type="entry name" value="DNA ligase/mRNA capping enzyme"/>
    <property type="match status" value="1"/>
</dbReference>
<dbReference type="Gene3D" id="1.10.287.610">
    <property type="entry name" value="Helix hairpin bin"/>
    <property type="match status" value="1"/>
</dbReference>
<dbReference type="Gene3D" id="2.40.50.140">
    <property type="entry name" value="Nucleic acid-binding proteins"/>
    <property type="match status" value="1"/>
</dbReference>
<dbReference type="HAMAP" id="MF_01588">
    <property type="entry name" value="DNA_ligase_A"/>
    <property type="match status" value="1"/>
</dbReference>
<dbReference type="InterPro" id="IPR001357">
    <property type="entry name" value="BRCT_dom"/>
</dbReference>
<dbReference type="InterPro" id="IPR036420">
    <property type="entry name" value="BRCT_dom_sf"/>
</dbReference>
<dbReference type="InterPro" id="IPR041663">
    <property type="entry name" value="DisA/LigA_HHH"/>
</dbReference>
<dbReference type="InterPro" id="IPR001679">
    <property type="entry name" value="DNA_ligase"/>
</dbReference>
<dbReference type="InterPro" id="IPR018239">
    <property type="entry name" value="DNA_ligase_AS"/>
</dbReference>
<dbReference type="InterPro" id="IPR013839">
    <property type="entry name" value="DNAligase_adenylation"/>
</dbReference>
<dbReference type="InterPro" id="IPR013840">
    <property type="entry name" value="DNAligase_N"/>
</dbReference>
<dbReference type="InterPro" id="IPR012340">
    <property type="entry name" value="NA-bd_OB-fold"/>
</dbReference>
<dbReference type="InterPro" id="IPR004150">
    <property type="entry name" value="NAD_DNA_ligase_OB"/>
</dbReference>
<dbReference type="InterPro" id="IPR010994">
    <property type="entry name" value="RuvA_2-like"/>
</dbReference>
<dbReference type="InterPro" id="IPR004149">
    <property type="entry name" value="Znf_DNAligase_C4"/>
</dbReference>
<dbReference type="NCBIfam" id="TIGR00575">
    <property type="entry name" value="dnlj"/>
    <property type="match status" value="1"/>
</dbReference>
<dbReference type="NCBIfam" id="NF005932">
    <property type="entry name" value="PRK07956.1"/>
    <property type="match status" value="1"/>
</dbReference>
<dbReference type="PANTHER" id="PTHR23389">
    <property type="entry name" value="CHROMOSOME TRANSMISSION FIDELITY FACTOR 18"/>
    <property type="match status" value="1"/>
</dbReference>
<dbReference type="PANTHER" id="PTHR23389:SF9">
    <property type="entry name" value="DNA LIGASE"/>
    <property type="match status" value="1"/>
</dbReference>
<dbReference type="Pfam" id="PF00533">
    <property type="entry name" value="BRCT"/>
    <property type="match status" value="1"/>
</dbReference>
<dbReference type="Pfam" id="PF01653">
    <property type="entry name" value="DNA_ligase_aden"/>
    <property type="match status" value="1"/>
</dbReference>
<dbReference type="Pfam" id="PF03120">
    <property type="entry name" value="DNA_ligase_OB"/>
    <property type="match status" value="1"/>
</dbReference>
<dbReference type="Pfam" id="PF03119">
    <property type="entry name" value="DNA_ligase_ZBD"/>
    <property type="match status" value="1"/>
</dbReference>
<dbReference type="Pfam" id="PF12826">
    <property type="entry name" value="HHH_2"/>
    <property type="match status" value="1"/>
</dbReference>
<dbReference type="PIRSF" id="PIRSF001604">
    <property type="entry name" value="LigA"/>
    <property type="match status" value="1"/>
</dbReference>
<dbReference type="SMART" id="SM00532">
    <property type="entry name" value="LIGANc"/>
    <property type="match status" value="1"/>
</dbReference>
<dbReference type="SUPFAM" id="SSF52113">
    <property type="entry name" value="BRCT domain"/>
    <property type="match status" value="1"/>
</dbReference>
<dbReference type="SUPFAM" id="SSF56091">
    <property type="entry name" value="DNA ligase/mRNA capping enzyme, catalytic domain"/>
    <property type="match status" value="1"/>
</dbReference>
<dbReference type="SUPFAM" id="SSF50249">
    <property type="entry name" value="Nucleic acid-binding proteins"/>
    <property type="match status" value="1"/>
</dbReference>
<dbReference type="SUPFAM" id="SSF47781">
    <property type="entry name" value="RuvA domain 2-like"/>
    <property type="match status" value="1"/>
</dbReference>
<dbReference type="PROSITE" id="PS50172">
    <property type="entry name" value="BRCT"/>
    <property type="match status" value="1"/>
</dbReference>
<dbReference type="PROSITE" id="PS01055">
    <property type="entry name" value="DNA_LIGASE_N1"/>
    <property type="match status" value="1"/>
</dbReference>
<organism>
    <name type="scientific">Malacoplasma penetrans (strain HF-2)</name>
    <name type="common">Mycoplasma penetrans</name>
    <dbReference type="NCBI Taxonomy" id="272633"/>
    <lineage>
        <taxon>Bacteria</taxon>
        <taxon>Bacillati</taxon>
        <taxon>Mycoplasmatota</taxon>
        <taxon>Mycoplasmoidales</taxon>
        <taxon>Mycoplasmoidaceae</taxon>
        <taxon>Malacoplasma</taxon>
    </lineage>
</organism>
<proteinExistence type="inferred from homology"/>
<name>DNLJ_MALP2</name>
<gene>
    <name evidence="1" type="primary">ligA</name>
    <name type="ordered locus">MYPE1840</name>
</gene>
<protein>
    <recommendedName>
        <fullName evidence="1">DNA ligase</fullName>
        <ecNumber evidence="1">6.5.1.2</ecNumber>
    </recommendedName>
    <alternativeName>
        <fullName evidence="1">Polydeoxyribonucleotide synthase [NAD(+)]</fullName>
    </alternativeName>
</protein>
<sequence length="701" mass="80848">MFVILHNKLIIYYLDMSNNKEILNRIQNLRKNLNQYNYEYYGLENPSVSDYEYDMCLKELIQLETQYPEFDSPNSPSKKVGGYISEKFNKVKHEIPMMSLSNAFDEEDLLKFDNDIKKAIGSSDFSYVVEPKIDGLSISVKYKDGNLIQAVTRGDGEIGEDVTQNIKTIKSLPLNIEYDKDLEIRGEVFLTKKDFEKINSDPNLTKKFANARNAASGSLRNLDSNITAKRNLSALFYYVPKATELKIAKQYDVLSWLDKQLIPISREIRHCNNIQGVIERISELTDTRDQFKYDIDGIVIKVNDFNHYEEIGYTSKFPKWAIAYKFPAVVKQTKLNSIDVTVGRTGRINYIANLDEILLEGSQVKKATLHNYDYIKDHEIMLNDIVEIYKAGEIIPKIIRSIKEKRDGSQVVFPEPTNCPSCDSKLVKKEQEVDLYCLNENCVEKQIQQIEYFSSRDAMNIEGLSISIISQLFRNKIINDAIDLYELAHKKEILIATKQKFYRKNDDGTKTEFERSLFKDKSFTNIIEAIEKSKSNSMEKFLTGLGIKYVGLRAAKALSKRFKSIEELAMATREEIEQVPDTGEKMSESLVNWFSDPKNQDLLWRAKKVGINFNYINEFNDVVVKNEHQKYMNKTFVITGSFNKSRNEIKNYIESVFNAKVSDSVSKKTDYLVVGENAGDSKLKKANDLKIEIITEPFWDN</sequence>
<accession>Q8EWL9</accession>
<keyword id="KW-0227">DNA damage</keyword>
<keyword id="KW-0234">DNA repair</keyword>
<keyword id="KW-0235">DNA replication</keyword>
<keyword id="KW-0436">Ligase</keyword>
<keyword id="KW-0460">Magnesium</keyword>
<keyword id="KW-0464">Manganese</keyword>
<keyword id="KW-0479">Metal-binding</keyword>
<keyword id="KW-0520">NAD</keyword>
<keyword id="KW-1185">Reference proteome</keyword>
<keyword id="KW-0862">Zinc</keyword>
<feature type="chain" id="PRO_0000313326" description="DNA ligase">
    <location>
        <begin position="1"/>
        <end position="701"/>
    </location>
</feature>
<feature type="domain" description="BRCT" evidence="1">
    <location>
        <begin position="626"/>
        <end position="701"/>
    </location>
</feature>
<feature type="active site" description="N6-AMP-lysine intermediate" evidence="1">
    <location>
        <position position="132"/>
    </location>
</feature>
<feature type="binding site" evidence="1">
    <location>
        <begin position="50"/>
        <end position="54"/>
    </location>
    <ligand>
        <name>NAD(+)</name>
        <dbReference type="ChEBI" id="CHEBI:57540"/>
    </ligand>
</feature>
<feature type="binding site" evidence="1">
    <location>
        <begin position="99"/>
        <end position="100"/>
    </location>
    <ligand>
        <name>NAD(+)</name>
        <dbReference type="ChEBI" id="CHEBI:57540"/>
    </ligand>
</feature>
<feature type="binding site" evidence="1">
    <location>
        <position position="130"/>
    </location>
    <ligand>
        <name>NAD(+)</name>
        <dbReference type="ChEBI" id="CHEBI:57540"/>
    </ligand>
</feature>
<feature type="binding site" evidence="1">
    <location>
        <position position="153"/>
    </location>
    <ligand>
        <name>NAD(+)</name>
        <dbReference type="ChEBI" id="CHEBI:57540"/>
    </ligand>
</feature>
<feature type="binding site" evidence="1">
    <location>
        <position position="187"/>
    </location>
    <ligand>
        <name>NAD(+)</name>
        <dbReference type="ChEBI" id="CHEBI:57540"/>
    </ligand>
</feature>
<feature type="binding site" evidence="1">
    <location>
        <position position="301"/>
    </location>
    <ligand>
        <name>NAD(+)</name>
        <dbReference type="ChEBI" id="CHEBI:57540"/>
    </ligand>
</feature>
<feature type="binding site" evidence="1">
    <location>
        <position position="325"/>
    </location>
    <ligand>
        <name>NAD(+)</name>
        <dbReference type="ChEBI" id="CHEBI:57540"/>
    </ligand>
</feature>
<feature type="binding site" evidence="1">
    <location>
        <position position="419"/>
    </location>
    <ligand>
        <name>Zn(2+)</name>
        <dbReference type="ChEBI" id="CHEBI:29105"/>
    </ligand>
</feature>
<feature type="binding site" evidence="1">
    <location>
        <position position="422"/>
    </location>
    <ligand>
        <name>Zn(2+)</name>
        <dbReference type="ChEBI" id="CHEBI:29105"/>
    </ligand>
</feature>
<feature type="binding site" evidence="1">
    <location>
        <position position="437"/>
    </location>
    <ligand>
        <name>Zn(2+)</name>
        <dbReference type="ChEBI" id="CHEBI:29105"/>
    </ligand>
</feature>
<feature type="binding site" evidence="1">
    <location>
        <position position="442"/>
    </location>
    <ligand>
        <name>Zn(2+)</name>
        <dbReference type="ChEBI" id="CHEBI:29105"/>
    </ligand>
</feature>